<keyword id="KW-0963">Cytoplasm</keyword>
<keyword id="KW-0269">Exonuclease</keyword>
<keyword id="KW-0378">Hydrolase</keyword>
<keyword id="KW-0540">Nuclease</keyword>
<comment type="function">
    <text evidence="1">Bidirectionally degrades single-stranded DNA into large acid-insoluble oligonucleotides, which are then degraded further into small acid-soluble oligonucleotides.</text>
</comment>
<comment type="catalytic activity">
    <reaction evidence="1">
        <text>Exonucleolytic cleavage in either 5'- to 3'- or 3'- to 5'-direction to yield nucleoside 5'-phosphates.</text>
        <dbReference type="EC" id="3.1.11.6"/>
    </reaction>
</comment>
<comment type="subunit">
    <text evidence="1">Heterooligomer composed of large and small subunits.</text>
</comment>
<comment type="subcellular location">
    <subcellularLocation>
        <location evidence="1">Cytoplasm</location>
    </subcellularLocation>
</comment>
<comment type="similarity">
    <text evidence="1">Belongs to the XseB family.</text>
</comment>
<feature type="chain" id="PRO_0000207011" description="Exodeoxyribonuclease 7 small subunit">
    <location>
        <begin position="1"/>
        <end position="71"/>
    </location>
</feature>
<dbReference type="EC" id="3.1.11.6" evidence="1"/>
<dbReference type="EMBL" id="AL766846">
    <property type="protein sequence ID" value="CAD46187.1"/>
    <property type="molecule type" value="Genomic_DNA"/>
</dbReference>
<dbReference type="RefSeq" id="WP_001280900.1">
    <property type="nucleotide sequence ID" value="NC_004368.1"/>
</dbReference>
<dbReference type="SMR" id="P67463"/>
<dbReference type="KEGG" id="san:gbs0543"/>
<dbReference type="eggNOG" id="COG1722">
    <property type="taxonomic scope" value="Bacteria"/>
</dbReference>
<dbReference type="HOGENOM" id="CLU_145918_3_2_9"/>
<dbReference type="Proteomes" id="UP000000823">
    <property type="component" value="Chromosome"/>
</dbReference>
<dbReference type="GO" id="GO:0005829">
    <property type="term" value="C:cytosol"/>
    <property type="evidence" value="ECO:0007669"/>
    <property type="project" value="TreeGrafter"/>
</dbReference>
<dbReference type="GO" id="GO:0009318">
    <property type="term" value="C:exodeoxyribonuclease VII complex"/>
    <property type="evidence" value="ECO:0007669"/>
    <property type="project" value="InterPro"/>
</dbReference>
<dbReference type="GO" id="GO:0008855">
    <property type="term" value="F:exodeoxyribonuclease VII activity"/>
    <property type="evidence" value="ECO:0007669"/>
    <property type="project" value="UniProtKB-UniRule"/>
</dbReference>
<dbReference type="GO" id="GO:0006308">
    <property type="term" value="P:DNA catabolic process"/>
    <property type="evidence" value="ECO:0007669"/>
    <property type="project" value="UniProtKB-UniRule"/>
</dbReference>
<dbReference type="Gene3D" id="1.10.287.1040">
    <property type="entry name" value="Exonuclease VII, small subunit"/>
    <property type="match status" value="1"/>
</dbReference>
<dbReference type="HAMAP" id="MF_00337">
    <property type="entry name" value="Exonuc_7_S"/>
    <property type="match status" value="1"/>
</dbReference>
<dbReference type="InterPro" id="IPR003761">
    <property type="entry name" value="Exonuc_VII_S"/>
</dbReference>
<dbReference type="InterPro" id="IPR037004">
    <property type="entry name" value="Exonuc_VII_ssu_sf"/>
</dbReference>
<dbReference type="NCBIfam" id="NF002138">
    <property type="entry name" value="PRK00977.1-2"/>
    <property type="match status" value="1"/>
</dbReference>
<dbReference type="NCBIfam" id="TIGR01280">
    <property type="entry name" value="xseB"/>
    <property type="match status" value="1"/>
</dbReference>
<dbReference type="PANTHER" id="PTHR34137">
    <property type="entry name" value="EXODEOXYRIBONUCLEASE 7 SMALL SUBUNIT"/>
    <property type="match status" value="1"/>
</dbReference>
<dbReference type="PANTHER" id="PTHR34137:SF1">
    <property type="entry name" value="EXODEOXYRIBONUCLEASE 7 SMALL SUBUNIT"/>
    <property type="match status" value="1"/>
</dbReference>
<dbReference type="Pfam" id="PF02609">
    <property type="entry name" value="Exonuc_VII_S"/>
    <property type="match status" value="1"/>
</dbReference>
<dbReference type="PIRSF" id="PIRSF006488">
    <property type="entry name" value="Exonuc_VII_S"/>
    <property type="match status" value="1"/>
</dbReference>
<dbReference type="SUPFAM" id="SSF116842">
    <property type="entry name" value="XseB-like"/>
    <property type="match status" value="1"/>
</dbReference>
<gene>
    <name evidence="1" type="primary">xseB</name>
    <name type="ordered locus">gbs0543</name>
</gene>
<organism>
    <name type="scientific">Streptococcus agalactiae serotype III (strain NEM316)</name>
    <dbReference type="NCBI Taxonomy" id="211110"/>
    <lineage>
        <taxon>Bacteria</taxon>
        <taxon>Bacillati</taxon>
        <taxon>Bacillota</taxon>
        <taxon>Bacilli</taxon>
        <taxon>Lactobacillales</taxon>
        <taxon>Streptococcaceae</taxon>
        <taxon>Streptococcus</taxon>
    </lineage>
</organism>
<evidence type="ECO:0000255" key="1">
    <source>
        <dbReference type="HAMAP-Rule" id="MF_00337"/>
    </source>
</evidence>
<accession>P67463</accession>
<accession>Q8E165</accession>
<accession>Q8E6M0</accession>
<reference key="1">
    <citation type="journal article" date="2002" name="Mol. Microbiol.">
        <title>Genome sequence of Streptococcus agalactiae, a pathogen causing invasive neonatal disease.</title>
        <authorList>
            <person name="Glaser P."/>
            <person name="Rusniok C."/>
            <person name="Buchrieser C."/>
            <person name="Chevalier F."/>
            <person name="Frangeul L."/>
            <person name="Msadek T."/>
            <person name="Zouine M."/>
            <person name="Couve E."/>
            <person name="Lalioui L."/>
            <person name="Poyart C."/>
            <person name="Trieu-Cuot P."/>
            <person name="Kunst F."/>
        </authorList>
    </citation>
    <scope>NUCLEOTIDE SEQUENCE [LARGE SCALE GENOMIC DNA]</scope>
    <source>
        <strain>NEM316</strain>
    </source>
</reference>
<sequence length="71" mass="8035">MSDKKTFEENLQELETIVSRLETGDVALEDAIAEFQKGMLISKELQRTLKEAEETLVKVMQADGTEVEMDT</sequence>
<protein>
    <recommendedName>
        <fullName evidence="1">Exodeoxyribonuclease 7 small subunit</fullName>
        <ecNumber evidence="1">3.1.11.6</ecNumber>
    </recommendedName>
    <alternativeName>
        <fullName evidence="1">Exodeoxyribonuclease VII small subunit</fullName>
        <shortName evidence="1">Exonuclease VII small subunit</shortName>
    </alternativeName>
</protein>
<proteinExistence type="inferred from homology"/>
<name>EX7S_STRA3</name>